<organism>
    <name type="scientific">Actinobacillus pleuropneumoniae serotype 5b (strain L20)</name>
    <dbReference type="NCBI Taxonomy" id="416269"/>
    <lineage>
        <taxon>Bacteria</taxon>
        <taxon>Pseudomonadati</taxon>
        <taxon>Pseudomonadota</taxon>
        <taxon>Gammaproteobacteria</taxon>
        <taxon>Pasteurellales</taxon>
        <taxon>Pasteurellaceae</taxon>
        <taxon>Actinobacillus</taxon>
    </lineage>
</organism>
<protein>
    <recommendedName>
        <fullName evidence="1">Phosphoenolpyruvate carboxykinase (ATP)</fullName>
        <shortName evidence="1">PCK</shortName>
        <shortName evidence="1">PEP carboxykinase</shortName>
        <shortName evidence="1">PEPCK</shortName>
        <ecNumber evidence="1">4.1.1.49</ecNumber>
    </recommendedName>
</protein>
<gene>
    <name evidence="1" type="primary">pckA</name>
    <name type="ordered locus">APL_0800</name>
</gene>
<evidence type="ECO:0000255" key="1">
    <source>
        <dbReference type="HAMAP-Rule" id="MF_00453"/>
    </source>
</evidence>
<dbReference type="EC" id="4.1.1.49" evidence="1"/>
<dbReference type="EMBL" id="CP000569">
    <property type="protein sequence ID" value="ABN73896.1"/>
    <property type="molecule type" value="Genomic_DNA"/>
</dbReference>
<dbReference type="RefSeq" id="WP_005601066.1">
    <property type="nucleotide sequence ID" value="NC_009053.1"/>
</dbReference>
<dbReference type="SMR" id="A3N0G0"/>
<dbReference type="STRING" id="416269.APL_0800"/>
<dbReference type="EnsemblBacteria" id="ABN73896">
    <property type="protein sequence ID" value="ABN73896"/>
    <property type="gene ID" value="APL_0800"/>
</dbReference>
<dbReference type="KEGG" id="apl:APL_0800"/>
<dbReference type="eggNOG" id="COG1866">
    <property type="taxonomic scope" value="Bacteria"/>
</dbReference>
<dbReference type="HOGENOM" id="CLU_018247_0_1_6"/>
<dbReference type="UniPathway" id="UPA00138"/>
<dbReference type="Proteomes" id="UP000001432">
    <property type="component" value="Chromosome"/>
</dbReference>
<dbReference type="GO" id="GO:0005829">
    <property type="term" value="C:cytosol"/>
    <property type="evidence" value="ECO:0007669"/>
    <property type="project" value="TreeGrafter"/>
</dbReference>
<dbReference type="GO" id="GO:0005524">
    <property type="term" value="F:ATP binding"/>
    <property type="evidence" value="ECO:0007669"/>
    <property type="project" value="UniProtKB-UniRule"/>
</dbReference>
<dbReference type="GO" id="GO:0046872">
    <property type="term" value="F:metal ion binding"/>
    <property type="evidence" value="ECO:0007669"/>
    <property type="project" value="UniProtKB-KW"/>
</dbReference>
<dbReference type="GO" id="GO:0004612">
    <property type="term" value="F:phosphoenolpyruvate carboxykinase (ATP) activity"/>
    <property type="evidence" value="ECO:0007669"/>
    <property type="project" value="UniProtKB-UniRule"/>
</dbReference>
<dbReference type="GO" id="GO:0006094">
    <property type="term" value="P:gluconeogenesis"/>
    <property type="evidence" value="ECO:0007669"/>
    <property type="project" value="UniProtKB-UniRule"/>
</dbReference>
<dbReference type="CDD" id="cd00484">
    <property type="entry name" value="PEPCK_ATP"/>
    <property type="match status" value="1"/>
</dbReference>
<dbReference type="FunFam" id="2.170.8.10:FF:000001">
    <property type="entry name" value="Phosphoenolpyruvate carboxykinase (ATP)"/>
    <property type="match status" value="1"/>
</dbReference>
<dbReference type="FunFam" id="3.40.449.10:FF:000001">
    <property type="entry name" value="Phosphoenolpyruvate carboxykinase (ATP)"/>
    <property type="match status" value="1"/>
</dbReference>
<dbReference type="Gene3D" id="3.90.228.20">
    <property type="match status" value="1"/>
</dbReference>
<dbReference type="Gene3D" id="3.40.449.10">
    <property type="entry name" value="Phosphoenolpyruvate Carboxykinase, domain 1"/>
    <property type="match status" value="1"/>
</dbReference>
<dbReference type="Gene3D" id="2.170.8.10">
    <property type="entry name" value="Phosphoenolpyruvate Carboxykinase, domain 2"/>
    <property type="match status" value="1"/>
</dbReference>
<dbReference type="HAMAP" id="MF_00453">
    <property type="entry name" value="PEPCK_ATP"/>
    <property type="match status" value="1"/>
</dbReference>
<dbReference type="InterPro" id="IPR001272">
    <property type="entry name" value="PEP_carboxykinase_ATP"/>
</dbReference>
<dbReference type="InterPro" id="IPR013035">
    <property type="entry name" value="PEP_carboxykinase_C"/>
</dbReference>
<dbReference type="InterPro" id="IPR008210">
    <property type="entry name" value="PEP_carboxykinase_N"/>
</dbReference>
<dbReference type="InterPro" id="IPR015994">
    <property type="entry name" value="PEPCK_ATP_CS"/>
</dbReference>
<dbReference type="NCBIfam" id="TIGR00224">
    <property type="entry name" value="pckA"/>
    <property type="match status" value="1"/>
</dbReference>
<dbReference type="NCBIfam" id="NF006819">
    <property type="entry name" value="PRK09344.1-1"/>
    <property type="match status" value="1"/>
</dbReference>
<dbReference type="NCBIfam" id="NF006820">
    <property type="entry name" value="PRK09344.1-2"/>
    <property type="match status" value="1"/>
</dbReference>
<dbReference type="NCBIfam" id="NF006821">
    <property type="entry name" value="PRK09344.1-3"/>
    <property type="match status" value="1"/>
</dbReference>
<dbReference type="PANTHER" id="PTHR30031:SF0">
    <property type="entry name" value="PHOSPHOENOLPYRUVATE CARBOXYKINASE (ATP)"/>
    <property type="match status" value="1"/>
</dbReference>
<dbReference type="PANTHER" id="PTHR30031">
    <property type="entry name" value="PHOSPHOENOLPYRUVATE CARBOXYKINASE ATP"/>
    <property type="match status" value="1"/>
</dbReference>
<dbReference type="Pfam" id="PF01293">
    <property type="entry name" value="PEPCK_ATP"/>
    <property type="match status" value="1"/>
</dbReference>
<dbReference type="PIRSF" id="PIRSF006294">
    <property type="entry name" value="PEP_crbxkin"/>
    <property type="match status" value="1"/>
</dbReference>
<dbReference type="SUPFAM" id="SSF68923">
    <property type="entry name" value="PEP carboxykinase N-terminal domain"/>
    <property type="match status" value="1"/>
</dbReference>
<dbReference type="SUPFAM" id="SSF53795">
    <property type="entry name" value="PEP carboxykinase-like"/>
    <property type="match status" value="1"/>
</dbReference>
<dbReference type="PROSITE" id="PS00532">
    <property type="entry name" value="PEPCK_ATP"/>
    <property type="match status" value="1"/>
</dbReference>
<keyword id="KW-0067">ATP-binding</keyword>
<keyword id="KW-0963">Cytoplasm</keyword>
<keyword id="KW-0210">Decarboxylase</keyword>
<keyword id="KW-0312">Gluconeogenesis</keyword>
<keyword id="KW-0456">Lyase</keyword>
<keyword id="KW-0464">Manganese</keyword>
<keyword id="KW-0479">Metal-binding</keyword>
<keyword id="KW-0547">Nucleotide-binding</keyword>
<keyword id="KW-1185">Reference proteome</keyword>
<sequence length="536" mass="59427">MLSRIEQELAQLGITNVKEIVRNPSYEQLFEEEMKPELEGFEKGRLTTSGAVAVDTGIFTGRSPKDKYIVYDETSKDNVWWTSDAVKNDNKPMNQATWQSLKELVTHQLSNKRLFVVDAFCGANKDSRVAVRIVTEVAWQAHFVKNMFVRPSEEELLNFVPDFVVMNGSKVTNPNWKEQGLNSENFVAFNLTEKIQLIGGTWYGGEMKKGLFSLMNYWLPLKGIASMHCSANVGAEGDVAVFFGLSGTGKTTLSTDPKRKLIGDDEHGWDDDGVFNYEGGCYAKTINLSEENEPDIYRAIRRDALLENVVVREDGSVDFADGSKTENTRVSYPIHHIDNIVEPVSKAGHAKKVIFLTADAFGVLPPVSKLTPEQTKYYFLSGFTAKLAGTERGITEPTPTFSACFGAAFLSLHPTKYAEVLVKRMEEAGSQAYLVNTGWNGSGKRISIKDTRGIIDAILDGSIEKAETKELPIFNLAIPTALPNVDPAILDPRDTYADKAQWQTKAEDLAGRFVKNFEKYTTNDEGKALVAAGPKL</sequence>
<comment type="function">
    <text evidence="1">Involved in the gluconeogenesis. Catalyzes the conversion of oxaloacetate (OAA) to phosphoenolpyruvate (PEP) through direct phosphoryl transfer between the nucleoside triphosphate and OAA.</text>
</comment>
<comment type="catalytic activity">
    <reaction evidence="1">
        <text>oxaloacetate + ATP = phosphoenolpyruvate + ADP + CO2</text>
        <dbReference type="Rhea" id="RHEA:18617"/>
        <dbReference type="ChEBI" id="CHEBI:16452"/>
        <dbReference type="ChEBI" id="CHEBI:16526"/>
        <dbReference type="ChEBI" id="CHEBI:30616"/>
        <dbReference type="ChEBI" id="CHEBI:58702"/>
        <dbReference type="ChEBI" id="CHEBI:456216"/>
        <dbReference type="EC" id="4.1.1.49"/>
    </reaction>
</comment>
<comment type="cofactor">
    <cofactor evidence="1">
        <name>Mn(2+)</name>
        <dbReference type="ChEBI" id="CHEBI:29035"/>
    </cofactor>
    <text evidence="1">Binds 1 Mn(2+) ion per subunit.</text>
</comment>
<comment type="pathway">
    <text evidence="1">Carbohydrate biosynthesis; gluconeogenesis.</text>
</comment>
<comment type="subunit">
    <text evidence="1">Monomer.</text>
</comment>
<comment type="subcellular location">
    <subcellularLocation>
        <location evidence="1">Cytoplasm</location>
    </subcellularLocation>
</comment>
<comment type="similarity">
    <text evidence="1">Belongs to the phosphoenolpyruvate carboxykinase (ATP) family.</text>
</comment>
<feature type="chain" id="PRO_1000026313" description="Phosphoenolpyruvate carboxykinase (ATP)">
    <location>
        <begin position="1"/>
        <end position="536"/>
    </location>
</feature>
<feature type="binding site" evidence="1">
    <location>
        <position position="62"/>
    </location>
    <ligand>
        <name>substrate</name>
    </ligand>
</feature>
<feature type="binding site" evidence="1">
    <location>
        <position position="203"/>
    </location>
    <ligand>
        <name>substrate</name>
    </ligand>
</feature>
<feature type="binding site" evidence="1">
    <location>
        <position position="209"/>
    </location>
    <ligand>
        <name>ATP</name>
        <dbReference type="ChEBI" id="CHEBI:30616"/>
    </ligand>
</feature>
<feature type="binding site" evidence="1">
    <location>
        <position position="209"/>
    </location>
    <ligand>
        <name>Mn(2+)</name>
        <dbReference type="ChEBI" id="CHEBI:29035"/>
    </ligand>
</feature>
<feature type="binding site" evidence="1">
    <location>
        <position position="209"/>
    </location>
    <ligand>
        <name>substrate</name>
    </ligand>
</feature>
<feature type="binding site" evidence="1">
    <location>
        <position position="228"/>
    </location>
    <ligand>
        <name>ATP</name>
        <dbReference type="ChEBI" id="CHEBI:30616"/>
    </ligand>
</feature>
<feature type="binding site" evidence="1">
    <location>
        <position position="228"/>
    </location>
    <ligand>
        <name>Mn(2+)</name>
        <dbReference type="ChEBI" id="CHEBI:29035"/>
    </ligand>
</feature>
<feature type="binding site" evidence="1">
    <location>
        <begin position="244"/>
        <end position="252"/>
    </location>
    <ligand>
        <name>ATP</name>
        <dbReference type="ChEBI" id="CHEBI:30616"/>
    </ligand>
</feature>
<feature type="binding site" evidence="1">
    <location>
        <position position="265"/>
    </location>
    <ligand>
        <name>Mn(2+)</name>
        <dbReference type="ChEBI" id="CHEBI:29035"/>
    </ligand>
</feature>
<feature type="binding site" evidence="1">
    <location>
        <position position="293"/>
    </location>
    <ligand>
        <name>ATP</name>
        <dbReference type="ChEBI" id="CHEBI:30616"/>
    </ligand>
</feature>
<feature type="binding site" evidence="1">
    <location>
        <position position="329"/>
    </location>
    <ligand>
        <name>ATP</name>
        <dbReference type="ChEBI" id="CHEBI:30616"/>
    </ligand>
</feature>
<feature type="binding site" evidence="1">
    <location>
        <position position="329"/>
    </location>
    <ligand>
        <name>substrate</name>
    </ligand>
</feature>
<feature type="binding site" evidence="1">
    <location>
        <begin position="445"/>
        <end position="446"/>
    </location>
    <ligand>
        <name>ATP</name>
        <dbReference type="ChEBI" id="CHEBI:30616"/>
    </ligand>
</feature>
<feature type="binding site" evidence="1">
    <location>
        <position position="451"/>
    </location>
    <ligand>
        <name>ATP</name>
        <dbReference type="ChEBI" id="CHEBI:30616"/>
    </ligand>
</feature>
<accession>A3N0G0</accession>
<name>PCKA_ACTP2</name>
<proteinExistence type="inferred from homology"/>
<reference key="1">
    <citation type="journal article" date="2008" name="J. Bacteriol.">
        <title>The complete genome sequence of Actinobacillus pleuropneumoniae L20 (serotype 5b).</title>
        <authorList>
            <person name="Foote S.J."/>
            <person name="Bosse J.T."/>
            <person name="Bouevitch A.B."/>
            <person name="Langford P.R."/>
            <person name="Young N.M."/>
            <person name="Nash J.H.E."/>
        </authorList>
    </citation>
    <scope>NUCLEOTIDE SEQUENCE [LARGE SCALE GENOMIC DNA]</scope>
    <source>
        <strain>L20</strain>
    </source>
</reference>